<reference key="1">
    <citation type="submission" date="2007-08" db="EMBL/GenBank/DDBJ databases">
        <authorList>
            <consortium name="The Vibrio harveyi Genome Sequencing Project"/>
            <person name="Bassler B."/>
            <person name="Clifton S.W."/>
            <person name="Fulton L."/>
            <person name="Delehaunty K."/>
            <person name="Fronick C."/>
            <person name="Harrison M."/>
            <person name="Markivic C."/>
            <person name="Fulton R."/>
            <person name="Tin-Wollam A.-M."/>
            <person name="Shah N."/>
            <person name="Pepin K."/>
            <person name="Nash W."/>
            <person name="Thiruvilangam P."/>
            <person name="Bhonagiri V."/>
            <person name="Waters C."/>
            <person name="Tu K.C."/>
            <person name="Irgon J."/>
            <person name="Wilson R.K."/>
        </authorList>
    </citation>
    <scope>NUCLEOTIDE SEQUENCE [LARGE SCALE GENOMIC DNA]</scope>
    <source>
        <strain>ATCC BAA-1116 / BB120</strain>
    </source>
</reference>
<protein>
    <recommendedName>
        <fullName evidence="1">HTH-type transcriptional regulator MalT</fullName>
    </recommendedName>
    <alternativeName>
        <fullName evidence="1">ATP-dependent transcriptional activator MalT</fullName>
    </alternativeName>
</protein>
<sequence length="902" mass="103870">MWIPSKLTRPGRLHNAIVRPRVLDLLQQAPYYKLVLFRSPAGYGKTTMAAQWLSDKPNVGWYSIDDSDNDGFRFVNYLLQALNKATNYNCSNAQKLAEKRQFSSLRSLFSEVFAEMADFQHECYVVLDDYHLITNDEIHESMRFFLKHMPDNLTVVVTSRAAPPLGTANLRVRDLMIEIGNEMLAFDTEETTRFFNQRIADGIDEDMANNLRTYVEGWPSALQLIALQAQHQNRTLAQTVESVSQFNHAHLWDYLVEEVFDLLDQETRHFLMQVSVLDHFNDELVFALTQREDALGMIESLNRFGLFIYPLEGEQNWFRFHNLFGEFLSHERLARIPQQEKDLHRNAAVAWLKQKAPHQAIHHAQKSNDTDLIVEILNEFGWKMFNQGELTTLESAINQLDKDLLFSHPKLSMLRAWLAQSQHRYNQVGKLLAEAEEEHKKRNIEIDSGYQGQANALLAQVAINSNQPEHALELAELALSQLDPTVYRSRIVATSVVGEVNHVLGKLDRALPMMQQTEKLARQYQVYHQALWAILQQSEIMIAQGYVQAAFELQDSGFRLIEEQQLQHVPLHEFLLRIRAQVLWCWNRLDEAEECAYKGLQILENHSPSKHLHSYSMLARIAIGRGELDKAGKFIEHIQHLMKQSTYHVDWTANASLSLILFWQARGNTEAIQEWLNTAVRPESACNHFQQLQWRNIARAHINLGQYDEAREALDFLQSEAHRTNLVTDTNRNLVVEAILAARQKDEEQAKTLLKEALVMTNQTGMVGNFLTDGATIGGLLEKLSLRHELGDLERHRAQQLMKDISSNQRSRSIHFDEDFIEKLVNHPNVPELVRTSPLTQREWQVLGLIYSGFSNEQIAQELDVAGTTIKTHIRNLYQKLNIANRKEAIVTAENLLQLMGY</sequence>
<gene>
    <name evidence="1" type="primary">malT</name>
    <name type="ordered locus">VIBHAR_04848</name>
</gene>
<proteinExistence type="inferred from homology"/>
<keyword id="KW-0010">Activator</keyword>
<keyword id="KW-0067">ATP-binding</keyword>
<keyword id="KW-0119">Carbohydrate metabolism</keyword>
<keyword id="KW-0238">DNA-binding</keyword>
<keyword id="KW-0547">Nucleotide-binding</keyword>
<keyword id="KW-0804">Transcription</keyword>
<keyword id="KW-0805">Transcription regulation</keyword>
<feature type="chain" id="PRO_1000085782" description="HTH-type transcriptional regulator MalT">
    <location>
        <begin position="1"/>
        <end position="902"/>
    </location>
</feature>
<feature type="domain" description="HTH luxR-type" evidence="1">
    <location>
        <begin position="832"/>
        <end position="897"/>
    </location>
</feature>
<feature type="DNA-binding region" description="H-T-H motif" evidence="1">
    <location>
        <begin position="856"/>
        <end position="875"/>
    </location>
</feature>
<feature type="binding site" evidence="1">
    <location>
        <begin position="39"/>
        <end position="46"/>
    </location>
    <ligand>
        <name>ATP</name>
        <dbReference type="ChEBI" id="CHEBI:30616"/>
    </ligand>
</feature>
<organism>
    <name type="scientific">Vibrio campbellii (strain ATCC BAA-1116)</name>
    <dbReference type="NCBI Taxonomy" id="2902295"/>
    <lineage>
        <taxon>Bacteria</taxon>
        <taxon>Pseudomonadati</taxon>
        <taxon>Pseudomonadota</taxon>
        <taxon>Gammaproteobacteria</taxon>
        <taxon>Vibrionales</taxon>
        <taxon>Vibrionaceae</taxon>
        <taxon>Vibrio</taxon>
    </lineage>
</organism>
<name>MALT_VIBC1</name>
<dbReference type="EMBL" id="CP000790">
    <property type="protein sequence ID" value="ABU72756.1"/>
    <property type="molecule type" value="Genomic_DNA"/>
</dbReference>
<dbReference type="RefSeq" id="WP_011999152.1">
    <property type="nucleotide sequence ID" value="NC_009784.1"/>
</dbReference>
<dbReference type="SMR" id="A7N5N6"/>
<dbReference type="KEGG" id="vha:VIBHAR_04848"/>
<dbReference type="PATRIC" id="fig|338187.25.peg.5341"/>
<dbReference type="Proteomes" id="UP000008152">
    <property type="component" value="Chromosome II"/>
</dbReference>
<dbReference type="GO" id="GO:0005524">
    <property type="term" value="F:ATP binding"/>
    <property type="evidence" value="ECO:0007669"/>
    <property type="project" value="UniProtKB-UniRule"/>
</dbReference>
<dbReference type="GO" id="GO:0003677">
    <property type="term" value="F:DNA binding"/>
    <property type="evidence" value="ECO:0007669"/>
    <property type="project" value="UniProtKB-KW"/>
</dbReference>
<dbReference type="GO" id="GO:0003700">
    <property type="term" value="F:DNA-binding transcription factor activity"/>
    <property type="evidence" value="ECO:0007669"/>
    <property type="project" value="UniProtKB-UniRule"/>
</dbReference>
<dbReference type="GO" id="GO:0045913">
    <property type="term" value="P:positive regulation of carbohydrate metabolic process"/>
    <property type="evidence" value="ECO:0007669"/>
    <property type="project" value="UniProtKB-UniRule"/>
</dbReference>
<dbReference type="GO" id="GO:0045893">
    <property type="term" value="P:positive regulation of DNA-templated transcription"/>
    <property type="evidence" value="ECO:0007669"/>
    <property type="project" value="UniProtKB-UniRule"/>
</dbReference>
<dbReference type="CDD" id="cd06170">
    <property type="entry name" value="LuxR_C_like"/>
    <property type="match status" value="1"/>
</dbReference>
<dbReference type="Gene3D" id="3.40.50.300">
    <property type="entry name" value="P-loop containing nucleotide triphosphate hydrolases"/>
    <property type="match status" value="1"/>
</dbReference>
<dbReference type="Gene3D" id="1.25.40.10">
    <property type="entry name" value="Tetratricopeptide repeat domain"/>
    <property type="match status" value="1"/>
</dbReference>
<dbReference type="Gene3D" id="1.10.10.10">
    <property type="entry name" value="Winged helix-like DNA-binding domain superfamily/Winged helix DNA-binding domain"/>
    <property type="match status" value="1"/>
</dbReference>
<dbReference type="HAMAP" id="MF_01247">
    <property type="entry name" value="HTH_type_MalT"/>
    <property type="match status" value="1"/>
</dbReference>
<dbReference type="InterPro" id="IPR027417">
    <property type="entry name" value="P-loop_NTPase"/>
</dbReference>
<dbReference type="InterPro" id="IPR016032">
    <property type="entry name" value="Sig_transdc_resp-reg_C-effctor"/>
</dbReference>
<dbReference type="InterPro" id="IPR011990">
    <property type="entry name" value="TPR-like_helical_dom_sf"/>
</dbReference>
<dbReference type="InterPro" id="IPR041617">
    <property type="entry name" value="TPR_MalT"/>
</dbReference>
<dbReference type="InterPro" id="IPR023768">
    <property type="entry name" value="Tscrpt_reg_HTH_MalT"/>
</dbReference>
<dbReference type="InterPro" id="IPR000792">
    <property type="entry name" value="Tscrpt_reg_LuxR_C"/>
</dbReference>
<dbReference type="InterPro" id="IPR036388">
    <property type="entry name" value="WH-like_DNA-bd_sf"/>
</dbReference>
<dbReference type="NCBIfam" id="NF003420">
    <property type="entry name" value="PRK04841.1"/>
    <property type="match status" value="1"/>
</dbReference>
<dbReference type="PANTHER" id="PTHR44688">
    <property type="entry name" value="DNA-BINDING TRANSCRIPTIONAL ACTIVATOR DEVR_DOSR"/>
    <property type="match status" value="1"/>
</dbReference>
<dbReference type="PANTHER" id="PTHR44688:SF16">
    <property type="entry name" value="DNA-BINDING TRANSCRIPTIONAL ACTIVATOR DEVR_DOSR"/>
    <property type="match status" value="1"/>
</dbReference>
<dbReference type="Pfam" id="PF00196">
    <property type="entry name" value="GerE"/>
    <property type="match status" value="1"/>
</dbReference>
<dbReference type="Pfam" id="PF17874">
    <property type="entry name" value="TPR_MalT"/>
    <property type="match status" value="1"/>
</dbReference>
<dbReference type="PRINTS" id="PR00038">
    <property type="entry name" value="HTHLUXR"/>
</dbReference>
<dbReference type="SMART" id="SM00421">
    <property type="entry name" value="HTH_LUXR"/>
    <property type="match status" value="1"/>
</dbReference>
<dbReference type="SUPFAM" id="SSF46894">
    <property type="entry name" value="C-terminal effector domain of the bipartite response regulators"/>
    <property type="match status" value="1"/>
</dbReference>
<dbReference type="SUPFAM" id="SSF52540">
    <property type="entry name" value="P-loop containing nucleoside triphosphate hydrolases"/>
    <property type="match status" value="1"/>
</dbReference>
<dbReference type="SUPFAM" id="SSF48452">
    <property type="entry name" value="TPR-like"/>
    <property type="match status" value="1"/>
</dbReference>
<dbReference type="PROSITE" id="PS00622">
    <property type="entry name" value="HTH_LUXR_1"/>
    <property type="match status" value="1"/>
</dbReference>
<dbReference type="PROSITE" id="PS50043">
    <property type="entry name" value="HTH_LUXR_2"/>
    <property type="match status" value="1"/>
</dbReference>
<evidence type="ECO:0000255" key="1">
    <source>
        <dbReference type="HAMAP-Rule" id="MF_01247"/>
    </source>
</evidence>
<comment type="function">
    <text evidence="1">Positively regulates the transcription of the maltose regulon whose gene products are responsible for uptake and catabolism of malto-oligosaccharides. Specifically binds to the promoter region of its target genes, recognizing a short DNA motif called the MalT box.</text>
</comment>
<comment type="activity regulation">
    <text evidence="1">Activated by ATP and maltotriose, which are both required for DNA binding.</text>
</comment>
<comment type="subunit">
    <text evidence="1">Monomer in solution. Oligomerizes to an active state in the presence of the positive effectors ATP and maltotriose.</text>
</comment>
<comment type="similarity">
    <text evidence="1">Belongs to the MalT family.</text>
</comment>
<accession>A7N5N6</accession>